<protein>
    <recommendedName>
        <fullName>Protein Wnt-4</fullName>
    </recommendedName>
    <alternativeName>
        <fullName>dWnt-4</fullName>
    </alternativeName>
</protein>
<name>WNT4_DROME</name>
<sequence length="539" mass="58685">MPSPTGVFVLMILTHLSFGLGQVRNEDQLLMVGQNGDLDSSNPAIHHQQHQQHQQHQQHQQHQSNHNLNNGNMNSTILNTLMGNNAGQVVNSSPGGGGSMINQLGSSTSSVPSVIGGGVGSVGNPWHSAVGLGVPGNGMGLPSSHGLGGNMGSHPHGHALAGLAKLGIIVPGGQGLPGNLGYGGTMLNGGGVGGAAGMGLGIGSNTNNMDMQQGLYNEHFISEHTVMAVFTSQGQVGGPCRYMPATRRQNHQCRKETGLPGTLSEARRLATTHCEEQFRYDRWNCSIETRGKRNIFKKLYKETAFVHALTAAAMTHSIARACAEGRMTKCSCGPKKHNREAQDFQWGGCNDNLKHGKRVTRSFLDLRGGDGDEVSEILRHDSEVGIEAVSSQMMDKCKCHGVSGSCSMKTCWKKMADFNATATLLRQKYNEAIRKAPNQRSMRQVSSSRMKKPKQRRKKPQQSQYTTLYYLETSPSYCAVTKDRQCLHPDNCGTLCCGRGYTTQVVKQVEKCRCRFNNGRCCQLICDYCQRLENKYFCK</sequence>
<proteinExistence type="evidence at transcript level"/>
<feature type="signal peptide" evidence="4">
    <location>
        <begin position="1"/>
        <end position="21"/>
    </location>
</feature>
<feature type="chain" id="PRO_0000041478" description="Protein Wnt-4">
    <location>
        <begin position="22"/>
        <end position="539"/>
    </location>
</feature>
<feature type="region of interest" description="Disordered" evidence="5">
    <location>
        <begin position="34"/>
        <end position="77"/>
    </location>
</feature>
<feature type="region of interest" description="Disordered" evidence="5">
    <location>
        <begin position="436"/>
        <end position="463"/>
    </location>
</feature>
<feature type="compositionally biased region" description="Low complexity" evidence="5">
    <location>
        <begin position="51"/>
        <end position="74"/>
    </location>
</feature>
<feature type="compositionally biased region" description="Low complexity" evidence="5">
    <location>
        <begin position="439"/>
        <end position="448"/>
    </location>
</feature>
<feature type="compositionally biased region" description="Basic residues" evidence="5">
    <location>
        <begin position="449"/>
        <end position="460"/>
    </location>
</feature>
<feature type="lipid moiety-binding region" description="O-palmitoleoyl serine; by PORCN" evidence="3">
    <location>
        <position position="403"/>
    </location>
</feature>
<feature type="glycosylation site" description="N-linked (GlcNAc...) asparagine" evidence="4">
    <location>
        <position position="74"/>
    </location>
</feature>
<feature type="glycosylation site" description="N-linked (GlcNAc...) asparagine" evidence="4">
    <location>
        <position position="284"/>
    </location>
</feature>
<feature type="glycosylation site" description="N-linked (GlcNAc...) asparagine" evidence="4">
    <location>
        <position position="419"/>
    </location>
</feature>
<feature type="disulfide bond" evidence="2">
    <location>
        <begin position="274"/>
        <end position="285"/>
    </location>
</feature>
<feature type="disulfide bond" evidence="2">
    <location>
        <begin position="322"/>
        <end position="330"/>
    </location>
</feature>
<feature type="disulfide bond" evidence="2">
    <location>
        <begin position="332"/>
        <end position="349"/>
    </location>
</feature>
<feature type="disulfide bond" evidence="2">
    <location>
        <begin position="397"/>
        <end position="411"/>
    </location>
</feature>
<feature type="disulfide bond" evidence="2">
    <location>
        <begin position="399"/>
        <end position="406"/>
    </location>
</feature>
<feature type="disulfide bond" evidence="2">
    <location>
        <begin position="478"/>
        <end position="497"/>
    </location>
</feature>
<feature type="disulfide bond" evidence="2">
    <location>
        <begin position="486"/>
        <end position="492"/>
    </location>
</feature>
<feature type="disulfide bond" evidence="2">
    <location>
        <begin position="496"/>
        <end position="538"/>
    </location>
</feature>
<feature type="disulfide bond" evidence="2">
    <location>
        <begin position="512"/>
        <end position="529"/>
    </location>
</feature>
<feature type="disulfide bond" evidence="2">
    <location>
        <begin position="514"/>
        <end position="526"/>
    </location>
</feature>
<feature type="disulfide bond" evidence="2">
    <location>
        <begin position="521"/>
        <end position="522"/>
    </location>
</feature>
<feature type="sequence conflict" description="In Ref. 1; AAN04479." evidence="7" ref="1">
    <original>F</original>
    <variation>L</variation>
    <location>
        <position position="18"/>
    </location>
</feature>
<feature type="sequence conflict" description="In Ref. 1; AAN04479." evidence="7" ref="1">
    <original>G</original>
    <variation>R</variation>
    <location>
        <position position="201"/>
    </location>
</feature>
<feature type="sequence conflict" description="In Ref. 5; AAM11406." evidence="7" ref="5">
    <original>F</original>
    <variation>L</variation>
    <location>
        <position position="230"/>
    </location>
</feature>
<feature type="sequence conflict" description="In Ref. 1; AAN04479." evidence="7" ref="1">
    <original>R</original>
    <variation>A</variation>
    <location>
        <position position="434"/>
    </location>
</feature>
<feature type="sequence conflict" description="In Ref. 1; AAN04479." evidence="7" ref="1">
    <original>L</original>
    <variation>V</variation>
    <location>
        <position position="532"/>
    </location>
</feature>
<evidence type="ECO:0000250" key="1">
    <source>
        <dbReference type="UniProtKB" id="P09615"/>
    </source>
</evidence>
<evidence type="ECO:0000250" key="2">
    <source>
        <dbReference type="UniProtKB" id="P28026"/>
    </source>
</evidence>
<evidence type="ECO:0000250" key="3">
    <source>
        <dbReference type="UniProtKB" id="P56704"/>
    </source>
</evidence>
<evidence type="ECO:0000255" key="4"/>
<evidence type="ECO:0000256" key="5">
    <source>
        <dbReference type="SAM" id="MobiDB-lite"/>
    </source>
</evidence>
<evidence type="ECO:0000269" key="6">
    <source>
    </source>
</evidence>
<evidence type="ECO:0000305" key="7"/>
<gene>
    <name type="primary">Wnt4</name>
    <name type="synonym">Wnt-4</name>
    <name type="ORF">CG4698</name>
</gene>
<accession>P40589</accession>
<accession>Q8MPQ1</accession>
<accession>Q8SWU3</accession>
<accession>Q9VM29</accession>
<keyword id="KW-0217">Developmental protein</keyword>
<keyword id="KW-1015">Disulfide bond</keyword>
<keyword id="KW-0272">Extracellular matrix</keyword>
<keyword id="KW-0325">Glycoprotein</keyword>
<keyword id="KW-0449">Lipoprotein</keyword>
<keyword id="KW-1185">Reference proteome</keyword>
<keyword id="KW-0964">Secreted</keyword>
<keyword id="KW-0732">Signal</keyword>
<keyword id="KW-0879">Wnt signaling pathway</keyword>
<comment type="function">
    <text evidence="6">Binds as a ligand to a family of frizzled seven-transmembrane receptors and acts through a cascade of genes on the nucleus. Acts downstream of homeotic complex genes in the visceral mesoderm and is required for embryonic segmentation. Also required for cell movement and FAK regulation during ovarian morphogenesis.</text>
</comment>
<comment type="subcellular location">
    <subcellularLocation>
        <location>Secreted</location>
        <location>Extracellular space</location>
        <location>Extracellular matrix</location>
    </subcellularLocation>
</comment>
<comment type="PTM">
    <text evidence="1">Palmitoleoylated by porcupine. The lipid group functions as a sorting signal, targeting the ligand to polarized vesicles that transport Wnt4 to unique sites at the cell surface. Depalmitoleoylated by notum, leading to inhibit Wnt signaling pathway.</text>
</comment>
<comment type="similarity">
    <text evidence="7">Belongs to the Wnt family.</text>
</comment>
<dbReference type="EMBL" id="AF533773">
    <property type="protein sequence ID" value="AAN04479.1"/>
    <property type="molecule type" value="mRNA"/>
</dbReference>
<dbReference type="EMBL" id="AE014134">
    <property type="protein sequence ID" value="AAF52499.2"/>
    <property type="molecule type" value="Genomic_DNA"/>
</dbReference>
<dbReference type="EMBL" id="AY095078">
    <property type="protein sequence ID" value="AAM11406.1"/>
    <property type="molecule type" value="mRNA"/>
</dbReference>
<dbReference type="RefSeq" id="NP_001260187.1">
    <property type="nucleotide sequence ID" value="NM_001273258.2"/>
</dbReference>
<dbReference type="RefSeq" id="NP_476972.2">
    <property type="nucleotide sequence ID" value="NM_057624.4"/>
</dbReference>
<dbReference type="SMR" id="P40589"/>
<dbReference type="BioGRID" id="60153">
    <property type="interactions" value="13"/>
</dbReference>
<dbReference type="FunCoup" id="P40589">
    <property type="interactions" value="8"/>
</dbReference>
<dbReference type="IntAct" id="P40589">
    <property type="interactions" value="3"/>
</dbReference>
<dbReference type="MINT" id="P40589"/>
<dbReference type="STRING" id="7227.FBpp0088345"/>
<dbReference type="GlyCosmos" id="P40589">
    <property type="glycosylation" value="3 sites, No reported glycans"/>
</dbReference>
<dbReference type="GlyGen" id="P40589">
    <property type="glycosylation" value="3 sites"/>
</dbReference>
<dbReference type="PaxDb" id="7227-FBpp0088345"/>
<dbReference type="DNASU" id="34007"/>
<dbReference type="EnsemblMetazoa" id="FBtr0089291">
    <property type="protein sequence ID" value="FBpp0088345"/>
    <property type="gene ID" value="FBgn0010453"/>
</dbReference>
<dbReference type="EnsemblMetazoa" id="FBtr0334799">
    <property type="protein sequence ID" value="FBpp0306845"/>
    <property type="gene ID" value="FBgn0010453"/>
</dbReference>
<dbReference type="GeneID" id="34007"/>
<dbReference type="KEGG" id="dme:Dmel_CG4698"/>
<dbReference type="AGR" id="FB:FBgn0010453"/>
<dbReference type="CTD" id="54361"/>
<dbReference type="FlyBase" id="FBgn0010453">
    <property type="gene designation" value="Wnt4"/>
</dbReference>
<dbReference type="VEuPathDB" id="VectorBase:FBgn0010453"/>
<dbReference type="eggNOG" id="KOG3913">
    <property type="taxonomic scope" value="Eukaryota"/>
</dbReference>
<dbReference type="GeneTree" id="ENSGT00940000157480"/>
<dbReference type="HOGENOM" id="CLU_505559_0_0_1"/>
<dbReference type="InParanoid" id="P40589"/>
<dbReference type="OMA" id="KQEQSQY"/>
<dbReference type="OrthoDB" id="5945655at2759"/>
<dbReference type="PhylomeDB" id="P40589"/>
<dbReference type="Reactome" id="R-DME-3238698">
    <property type="pathway name" value="WNT ligand biogenesis and trafficking"/>
</dbReference>
<dbReference type="Reactome" id="R-DME-4086398">
    <property type="pathway name" value="Ca2+ pathway"/>
</dbReference>
<dbReference type="Reactome" id="R-DME-4086400">
    <property type="pathway name" value="PCP/CE pathway"/>
</dbReference>
<dbReference type="SignaLink" id="P40589"/>
<dbReference type="BioGRID-ORCS" id="34007">
    <property type="hits" value="0 hits in 3 CRISPR screens"/>
</dbReference>
<dbReference type="GenomeRNAi" id="34007"/>
<dbReference type="PRO" id="PR:P40589"/>
<dbReference type="Proteomes" id="UP000000803">
    <property type="component" value="Chromosome 2L"/>
</dbReference>
<dbReference type="Bgee" id="FBgn0010453">
    <property type="expression patterns" value="Expressed in cyst progenitor cell (Drosophila) in testis and 145 other cell types or tissues"/>
</dbReference>
<dbReference type="ExpressionAtlas" id="P40589">
    <property type="expression patterns" value="baseline and differential"/>
</dbReference>
<dbReference type="GO" id="GO:0009986">
    <property type="term" value="C:cell surface"/>
    <property type="evidence" value="ECO:0000314"/>
    <property type="project" value="FlyBase"/>
</dbReference>
<dbReference type="GO" id="GO:0005576">
    <property type="term" value="C:extracellular region"/>
    <property type="evidence" value="ECO:0000250"/>
    <property type="project" value="FlyBase"/>
</dbReference>
<dbReference type="GO" id="GO:0005615">
    <property type="term" value="C:extracellular space"/>
    <property type="evidence" value="ECO:0000318"/>
    <property type="project" value="GO_Central"/>
</dbReference>
<dbReference type="GO" id="GO:0005125">
    <property type="term" value="F:cytokine activity"/>
    <property type="evidence" value="ECO:0000318"/>
    <property type="project" value="GO_Central"/>
</dbReference>
<dbReference type="GO" id="GO:0005109">
    <property type="term" value="F:frizzled binding"/>
    <property type="evidence" value="ECO:0000353"/>
    <property type="project" value="FlyBase"/>
</dbReference>
<dbReference type="GO" id="GO:0048018">
    <property type="term" value="F:receptor ligand activity"/>
    <property type="evidence" value="ECO:0000316"/>
    <property type="project" value="FlyBase"/>
</dbReference>
<dbReference type="GO" id="GO:0005102">
    <property type="term" value="F:signaling receptor binding"/>
    <property type="evidence" value="ECO:0000250"/>
    <property type="project" value="FlyBase"/>
</dbReference>
<dbReference type="GO" id="GO:0060070">
    <property type="term" value="P:canonical Wnt signaling pathway"/>
    <property type="evidence" value="ECO:0000318"/>
    <property type="project" value="GO_Central"/>
</dbReference>
<dbReference type="GO" id="GO:0045165">
    <property type="term" value="P:cell fate commitment"/>
    <property type="evidence" value="ECO:0000318"/>
    <property type="project" value="GO_Central"/>
</dbReference>
<dbReference type="GO" id="GO:0016477">
    <property type="term" value="P:cell migration"/>
    <property type="evidence" value="ECO:0000315"/>
    <property type="project" value="UniProtKB"/>
</dbReference>
<dbReference type="GO" id="GO:0001736">
    <property type="term" value="P:establishment of planar polarity"/>
    <property type="evidence" value="ECO:0000316"/>
    <property type="project" value="FlyBase"/>
</dbReference>
<dbReference type="GO" id="GO:0008585">
    <property type="term" value="P:female gonad development"/>
    <property type="evidence" value="ECO:0000315"/>
    <property type="project" value="UniProtKB"/>
</dbReference>
<dbReference type="GO" id="GO:0060250">
    <property type="term" value="P:germ-line stem-cell niche homeostasis"/>
    <property type="evidence" value="ECO:0000315"/>
    <property type="project" value="FlyBase"/>
</dbReference>
<dbReference type="GO" id="GO:0008045">
    <property type="term" value="P:motor neuron axon guidance"/>
    <property type="evidence" value="ECO:0000315"/>
    <property type="project" value="FlyBase"/>
</dbReference>
<dbReference type="GO" id="GO:0030182">
    <property type="term" value="P:neuron differentiation"/>
    <property type="evidence" value="ECO:0000318"/>
    <property type="project" value="GO_Central"/>
</dbReference>
<dbReference type="GO" id="GO:0035567">
    <property type="term" value="P:non-canonical Wnt signaling pathway"/>
    <property type="evidence" value="ECO:0000315"/>
    <property type="project" value="FlyBase"/>
</dbReference>
<dbReference type="GO" id="GO:0035206">
    <property type="term" value="P:regulation of hemocyte proliferation"/>
    <property type="evidence" value="ECO:0000315"/>
    <property type="project" value="FlyBase"/>
</dbReference>
<dbReference type="GO" id="GO:0031290">
    <property type="term" value="P:retinal ganglion cell axon guidance"/>
    <property type="evidence" value="ECO:0000315"/>
    <property type="project" value="FlyBase"/>
</dbReference>
<dbReference type="GO" id="GO:0007435">
    <property type="term" value="P:salivary gland morphogenesis"/>
    <property type="evidence" value="ECO:0000315"/>
    <property type="project" value="FlyBase"/>
</dbReference>
<dbReference type="GO" id="GO:0016201">
    <property type="term" value="P:synaptic target inhibition"/>
    <property type="evidence" value="ECO:0000315"/>
    <property type="project" value="FlyBase"/>
</dbReference>
<dbReference type="GO" id="GO:0016055">
    <property type="term" value="P:Wnt signaling pathway"/>
    <property type="evidence" value="ECO:0000250"/>
    <property type="project" value="FlyBase"/>
</dbReference>
<dbReference type="CDD" id="cd19341">
    <property type="entry name" value="Wnt_Wnt9"/>
    <property type="match status" value="1"/>
</dbReference>
<dbReference type="FunFam" id="3.30.2460.20:FF:000005">
    <property type="entry name" value="Protein Wnt"/>
    <property type="match status" value="1"/>
</dbReference>
<dbReference type="Gene3D" id="3.30.2460.20">
    <property type="match status" value="1"/>
</dbReference>
<dbReference type="InterPro" id="IPR005817">
    <property type="entry name" value="Wnt"/>
</dbReference>
<dbReference type="InterPro" id="IPR043158">
    <property type="entry name" value="Wnt_C"/>
</dbReference>
<dbReference type="InterPro" id="IPR018161">
    <property type="entry name" value="Wnt_CS"/>
</dbReference>
<dbReference type="PANTHER" id="PTHR12027:SF97">
    <property type="entry name" value="PROTEIN WNT-4"/>
    <property type="match status" value="1"/>
</dbReference>
<dbReference type="PANTHER" id="PTHR12027">
    <property type="entry name" value="WNT RELATED"/>
    <property type="match status" value="1"/>
</dbReference>
<dbReference type="Pfam" id="PF00110">
    <property type="entry name" value="wnt"/>
    <property type="match status" value="1"/>
</dbReference>
<dbReference type="PRINTS" id="PR01349">
    <property type="entry name" value="WNTPROTEIN"/>
</dbReference>
<dbReference type="SMART" id="SM00097">
    <property type="entry name" value="WNT1"/>
    <property type="match status" value="1"/>
</dbReference>
<dbReference type="PROSITE" id="PS00246">
    <property type="entry name" value="WNT1"/>
    <property type="match status" value="1"/>
</dbReference>
<reference key="1">
    <citation type="journal article" date="2002" name="Dev. Cell">
        <title>DWnt4 regulates cell movement and focal adhesion kinase during Drosophila ovarian morphogenesis.</title>
        <authorList>
            <person name="Cohen E.D."/>
            <person name="Mariol M.-C."/>
            <person name="Wallace R.M.H."/>
            <person name="Weyers J."/>
            <person name="Kamberov Y.G."/>
            <person name="Pradel J."/>
            <person name="Wilder E.L."/>
        </authorList>
    </citation>
    <scope>NUCLEOTIDE SEQUENCE</scope>
    <scope>SEQUENCE REVISION TO 171</scope>
    <scope>FUNCTION</scope>
</reference>
<reference key="2">
    <citation type="journal article" date="1995" name="Development">
        <title>DWnt-4, a novel Drosophila Wnt gene acts downstream of homeotic complex genes in the visceral mesoderm.</title>
        <authorList>
            <person name="Graba Y."/>
            <person name="Gieseler K."/>
            <person name="Aragnol D."/>
            <person name="Laurenti P."/>
            <person name="Mariol M.-C."/>
            <person name="Berenger H."/>
            <person name="Sagnier T."/>
            <person name="Pradel J."/>
        </authorList>
    </citation>
    <scope>NUCLEOTIDE SEQUENCE OF 151-539</scope>
</reference>
<reference key="3">
    <citation type="journal article" date="2000" name="Science">
        <title>The genome sequence of Drosophila melanogaster.</title>
        <authorList>
            <person name="Adams M.D."/>
            <person name="Celniker S.E."/>
            <person name="Holt R.A."/>
            <person name="Evans C.A."/>
            <person name="Gocayne J.D."/>
            <person name="Amanatides P.G."/>
            <person name="Scherer S.E."/>
            <person name="Li P.W."/>
            <person name="Hoskins R.A."/>
            <person name="Galle R.F."/>
            <person name="George R.A."/>
            <person name="Lewis S.E."/>
            <person name="Richards S."/>
            <person name="Ashburner M."/>
            <person name="Henderson S.N."/>
            <person name="Sutton G.G."/>
            <person name="Wortman J.R."/>
            <person name="Yandell M.D."/>
            <person name="Zhang Q."/>
            <person name="Chen L.X."/>
            <person name="Brandon R.C."/>
            <person name="Rogers Y.-H.C."/>
            <person name="Blazej R.G."/>
            <person name="Champe M."/>
            <person name="Pfeiffer B.D."/>
            <person name="Wan K.H."/>
            <person name="Doyle C."/>
            <person name="Baxter E.G."/>
            <person name="Helt G."/>
            <person name="Nelson C.R."/>
            <person name="Miklos G.L.G."/>
            <person name="Abril J.F."/>
            <person name="Agbayani A."/>
            <person name="An H.-J."/>
            <person name="Andrews-Pfannkoch C."/>
            <person name="Baldwin D."/>
            <person name="Ballew R.M."/>
            <person name="Basu A."/>
            <person name="Baxendale J."/>
            <person name="Bayraktaroglu L."/>
            <person name="Beasley E.M."/>
            <person name="Beeson K.Y."/>
            <person name="Benos P.V."/>
            <person name="Berman B.P."/>
            <person name="Bhandari D."/>
            <person name="Bolshakov S."/>
            <person name="Borkova D."/>
            <person name="Botchan M.R."/>
            <person name="Bouck J."/>
            <person name="Brokstein P."/>
            <person name="Brottier P."/>
            <person name="Burtis K.C."/>
            <person name="Busam D.A."/>
            <person name="Butler H."/>
            <person name="Cadieu E."/>
            <person name="Center A."/>
            <person name="Chandra I."/>
            <person name="Cherry J.M."/>
            <person name="Cawley S."/>
            <person name="Dahlke C."/>
            <person name="Davenport L.B."/>
            <person name="Davies P."/>
            <person name="de Pablos B."/>
            <person name="Delcher A."/>
            <person name="Deng Z."/>
            <person name="Mays A.D."/>
            <person name="Dew I."/>
            <person name="Dietz S.M."/>
            <person name="Dodson K."/>
            <person name="Doup L.E."/>
            <person name="Downes M."/>
            <person name="Dugan-Rocha S."/>
            <person name="Dunkov B.C."/>
            <person name="Dunn P."/>
            <person name="Durbin K.J."/>
            <person name="Evangelista C.C."/>
            <person name="Ferraz C."/>
            <person name="Ferriera S."/>
            <person name="Fleischmann W."/>
            <person name="Fosler C."/>
            <person name="Gabrielian A.E."/>
            <person name="Garg N.S."/>
            <person name="Gelbart W.M."/>
            <person name="Glasser K."/>
            <person name="Glodek A."/>
            <person name="Gong F."/>
            <person name="Gorrell J.H."/>
            <person name="Gu Z."/>
            <person name="Guan P."/>
            <person name="Harris M."/>
            <person name="Harris N.L."/>
            <person name="Harvey D.A."/>
            <person name="Heiman T.J."/>
            <person name="Hernandez J.R."/>
            <person name="Houck J."/>
            <person name="Hostin D."/>
            <person name="Houston K.A."/>
            <person name="Howland T.J."/>
            <person name="Wei M.-H."/>
            <person name="Ibegwam C."/>
            <person name="Jalali M."/>
            <person name="Kalush F."/>
            <person name="Karpen G.H."/>
            <person name="Ke Z."/>
            <person name="Kennison J.A."/>
            <person name="Ketchum K.A."/>
            <person name="Kimmel B.E."/>
            <person name="Kodira C.D."/>
            <person name="Kraft C.L."/>
            <person name="Kravitz S."/>
            <person name="Kulp D."/>
            <person name="Lai Z."/>
            <person name="Lasko P."/>
            <person name="Lei Y."/>
            <person name="Levitsky A.A."/>
            <person name="Li J.H."/>
            <person name="Li Z."/>
            <person name="Liang Y."/>
            <person name="Lin X."/>
            <person name="Liu X."/>
            <person name="Mattei B."/>
            <person name="McIntosh T.C."/>
            <person name="McLeod M.P."/>
            <person name="McPherson D."/>
            <person name="Merkulov G."/>
            <person name="Milshina N.V."/>
            <person name="Mobarry C."/>
            <person name="Morris J."/>
            <person name="Moshrefi A."/>
            <person name="Mount S.M."/>
            <person name="Moy M."/>
            <person name="Murphy B."/>
            <person name="Murphy L."/>
            <person name="Muzny D.M."/>
            <person name="Nelson D.L."/>
            <person name="Nelson D.R."/>
            <person name="Nelson K.A."/>
            <person name="Nixon K."/>
            <person name="Nusskern D.R."/>
            <person name="Pacleb J.M."/>
            <person name="Palazzolo M."/>
            <person name="Pittman G.S."/>
            <person name="Pan S."/>
            <person name="Pollard J."/>
            <person name="Puri V."/>
            <person name="Reese M.G."/>
            <person name="Reinert K."/>
            <person name="Remington K."/>
            <person name="Saunders R.D.C."/>
            <person name="Scheeler F."/>
            <person name="Shen H."/>
            <person name="Shue B.C."/>
            <person name="Siden-Kiamos I."/>
            <person name="Simpson M."/>
            <person name="Skupski M.P."/>
            <person name="Smith T.J."/>
            <person name="Spier E."/>
            <person name="Spradling A.C."/>
            <person name="Stapleton M."/>
            <person name="Strong R."/>
            <person name="Sun E."/>
            <person name="Svirskas R."/>
            <person name="Tector C."/>
            <person name="Turner R."/>
            <person name="Venter E."/>
            <person name="Wang A.H."/>
            <person name="Wang X."/>
            <person name="Wang Z.-Y."/>
            <person name="Wassarman D.A."/>
            <person name="Weinstock G.M."/>
            <person name="Weissenbach J."/>
            <person name="Williams S.M."/>
            <person name="Woodage T."/>
            <person name="Worley K.C."/>
            <person name="Wu D."/>
            <person name="Yang S."/>
            <person name="Yao Q.A."/>
            <person name="Ye J."/>
            <person name="Yeh R.-F."/>
            <person name="Zaveri J.S."/>
            <person name="Zhan M."/>
            <person name="Zhang G."/>
            <person name="Zhao Q."/>
            <person name="Zheng L."/>
            <person name="Zheng X.H."/>
            <person name="Zhong F.N."/>
            <person name="Zhong W."/>
            <person name="Zhou X."/>
            <person name="Zhu S.C."/>
            <person name="Zhu X."/>
            <person name="Smith H.O."/>
            <person name="Gibbs R.A."/>
            <person name="Myers E.W."/>
            <person name="Rubin G.M."/>
            <person name="Venter J.C."/>
        </authorList>
    </citation>
    <scope>NUCLEOTIDE SEQUENCE [LARGE SCALE GENOMIC DNA]</scope>
    <source>
        <strain>Berkeley</strain>
    </source>
</reference>
<reference key="4">
    <citation type="journal article" date="2002" name="Genome Biol.">
        <title>Annotation of the Drosophila melanogaster euchromatic genome: a systematic review.</title>
        <authorList>
            <person name="Misra S."/>
            <person name="Crosby M.A."/>
            <person name="Mungall C.J."/>
            <person name="Matthews B.B."/>
            <person name="Campbell K.S."/>
            <person name="Hradecky P."/>
            <person name="Huang Y."/>
            <person name="Kaminker J.S."/>
            <person name="Millburn G.H."/>
            <person name="Prochnik S.E."/>
            <person name="Smith C.D."/>
            <person name="Tupy J.L."/>
            <person name="Whitfield E.J."/>
            <person name="Bayraktaroglu L."/>
            <person name="Berman B.P."/>
            <person name="Bettencourt B.R."/>
            <person name="Celniker S.E."/>
            <person name="de Grey A.D.N.J."/>
            <person name="Drysdale R.A."/>
            <person name="Harris N.L."/>
            <person name="Richter J."/>
            <person name="Russo S."/>
            <person name="Schroeder A.J."/>
            <person name="Shu S.Q."/>
            <person name="Stapleton M."/>
            <person name="Yamada C."/>
            <person name="Ashburner M."/>
            <person name="Gelbart W.M."/>
            <person name="Rubin G.M."/>
            <person name="Lewis S.E."/>
        </authorList>
    </citation>
    <scope>GENOME REANNOTATION</scope>
    <source>
        <strain>Berkeley</strain>
    </source>
</reference>
<reference key="5">
    <citation type="journal article" date="2002" name="Genome Biol.">
        <title>A Drosophila full-length cDNA resource.</title>
        <authorList>
            <person name="Stapleton M."/>
            <person name="Carlson J.W."/>
            <person name="Brokstein P."/>
            <person name="Yu C."/>
            <person name="Champe M."/>
            <person name="George R.A."/>
            <person name="Guarin H."/>
            <person name="Kronmiller B."/>
            <person name="Pacleb J.M."/>
            <person name="Park S."/>
            <person name="Wan K.H."/>
            <person name="Rubin G.M."/>
            <person name="Celniker S.E."/>
        </authorList>
    </citation>
    <scope>NUCLEOTIDE SEQUENCE [LARGE SCALE MRNA]</scope>
    <source>
        <strain>Berkeley</strain>
        <tissue>Embryo</tissue>
    </source>
</reference>
<organism>
    <name type="scientific">Drosophila melanogaster</name>
    <name type="common">Fruit fly</name>
    <dbReference type="NCBI Taxonomy" id="7227"/>
    <lineage>
        <taxon>Eukaryota</taxon>
        <taxon>Metazoa</taxon>
        <taxon>Ecdysozoa</taxon>
        <taxon>Arthropoda</taxon>
        <taxon>Hexapoda</taxon>
        <taxon>Insecta</taxon>
        <taxon>Pterygota</taxon>
        <taxon>Neoptera</taxon>
        <taxon>Endopterygota</taxon>
        <taxon>Diptera</taxon>
        <taxon>Brachycera</taxon>
        <taxon>Muscomorpha</taxon>
        <taxon>Ephydroidea</taxon>
        <taxon>Drosophilidae</taxon>
        <taxon>Drosophila</taxon>
        <taxon>Sophophora</taxon>
    </lineage>
</organism>